<sequence>MCTPNDLAVLHAIFNPNVPFGNFDEQNVGDTEANADLDGRFSSAILQQAQDLERDGVKAAESEDMATAILKFSEAIALLPERASAYNNRAQALRLQGDVKGALEDLNQAVELSGIAGVAGRQALVQRGLILRLQGKDDEARKDFQRAAQLGSDFAKQQLILLNPYAALCNTMLRDMMQKLREPNGHKIQVGASTSLEDDREA</sequence>
<organism>
    <name type="scientific">Xenopus tropicalis</name>
    <name type="common">Western clawed frog</name>
    <name type="synonym">Silurana tropicalis</name>
    <dbReference type="NCBI Taxonomy" id="8364"/>
    <lineage>
        <taxon>Eukaryota</taxon>
        <taxon>Metazoa</taxon>
        <taxon>Chordata</taxon>
        <taxon>Craniata</taxon>
        <taxon>Vertebrata</taxon>
        <taxon>Euteleostomi</taxon>
        <taxon>Amphibia</taxon>
        <taxon>Batrachia</taxon>
        <taxon>Anura</taxon>
        <taxon>Pipoidea</taxon>
        <taxon>Pipidae</taxon>
        <taxon>Xenopodinae</taxon>
        <taxon>Xenopus</taxon>
        <taxon>Silurana</taxon>
    </lineage>
</organism>
<accession>Q5EBF2</accession>
<reference key="1">
    <citation type="submission" date="2005-02" db="EMBL/GenBank/DDBJ databases">
        <authorList>
            <consortium name="NIH - Xenopus Gene Collection (XGC) project"/>
        </authorList>
    </citation>
    <scope>NUCLEOTIDE SEQUENCE [LARGE SCALE MRNA]</scope>
</reference>
<evidence type="ECO:0000305" key="1"/>
<comment type="similarity">
    <text evidence="1">Belongs to the TTC36 family.</text>
</comment>
<keyword id="KW-1185">Reference proteome</keyword>
<keyword id="KW-0677">Repeat</keyword>
<keyword id="KW-0802">TPR repeat</keyword>
<gene>
    <name type="primary">ttc36</name>
</gene>
<proteinExistence type="evidence at transcript level"/>
<feature type="chain" id="PRO_0000332183" description="Tetratricopeptide repeat protein 36">
    <location>
        <begin position="1"/>
        <end position="202"/>
    </location>
</feature>
<feature type="repeat" description="TPR 1">
    <location>
        <begin position="49"/>
        <end position="82"/>
    </location>
</feature>
<feature type="repeat" description="TPR 2">
    <location>
        <begin position="83"/>
        <end position="116"/>
    </location>
</feature>
<feature type="repeat" description="TPR 3">
    <location>
        <begin position="121"/>
        <end position="154"/>
    </location>
</feature>
<protein>
    <recommendedName>
        <fullName>Tetratricopeptide repeat protein 36</fullName>
        <shortName>TPR repeat protein 36</shortName>
    </recommendedName>
</protein>
<dbReference type="EMBL" id="BC089712">
    <property type="protein sequence ID" value="AAH89712.1"/>
    <property type="molecule type" value="mRNA"/>
</dbReference>
<dbReference type="RefSeq" id="NP_001015772.1">
    <property type="nucleotide sequence ID" value="NM_001015772.1"/>
</dbReference>
<dbReference type="SMR" id="Q5EBF2"/>
<dbReference type="FunCoup" id="Q5EBF2">
    <property type="interactions" value="2"/>
</dbReference>
<dbReference type="PaxDb" id="8364-ENSXETP00000046598"/>
<dbReference type="DNASU" id="548489"/>
<dbReference type="GeneID" id="548489"/>
<dbReference type="KEGG" id="xtr:548489"/>
<dbReference type="AGR" id="Xenbase:XB-GENE-5803642"/>
<dbReference type="CTD" id="143941"/>
<dbReference type="Xenbase" id="XB-GENE-5803642">
    <property type="gene designation" value="ttc36"/>
</dbReference>
<dbReference type="eggNOG" id="KOG4555">
    <property type="taxonomic scope" value="Eukaryota"/>
</dbReference>
<dbReference type="HOGENOM" id="CLU_1464567_0_0_1"/>
<dbReference type="InParanoid" id="Q5EBF2"/>
<dbReference type="OMA" id="CNQMLCE"/>
<dbReference type="OrthoDB" id="539634at2759"/>
<dbReference type="PhylomeDB" id="Q5EBF2"/>
<dbReference type="TreeFam" id="TF105820"/>
<dbReference type="Proteomes" id="UP000008143">
    <property type="component" value="Chromosome 7"/>
</dbReference>
<dbReference type="FunFam" id="1.25.40.10:FF:000213">
    <property type="entry name" value="Tetratricopeptide repeat domain 36"/>
    <property type="match status" value="1"/>
</dbReference>
<dbReference type="Gene3D" id="1.25.40.10">
    <property type="entry name" value="Tetratricopeptide repeat domain"/>
    <property type="match status" value="1"/>
</dbReference>
<dbReference type="InterPro" id="IPR011990">
    <property type="entry name" value="TPR-like_helical_dom_sf"/>
</dbReference>
<dbReference type="InterPro" id="IPR013105">
    <property type="entry name" value="TPR_2"/>
</dbReference>
<dbReference type="InterPro" id="IPR019734">
    <property type="entry name" value="TPR_rpt"/>
</dbReference>
<dbReference type="InterPro" id="IPR038906">
    <property type="entry name" value="TTC36"/>
</dbReference>
<dbReference type="PANTHER" id="PTHR21405">
    <property type="entry name" value="CDNA SEQUENCE BC021608"/>
    <property type="match status" value="1"/>
</dbReference>
<dbReference type="PANTHER" id="PTHR21405:SF0">
    <property type="entry name" value="TETRATRICOPEPTIDE REPEAT PROTEIN 36"/>
    <property type="match status" value="1"/>
</dbReference>
<dbReference type="Pfam" id="PF07719">
    <property type="entry name" value="TPR_2"/>
    <property type="match status" value="1"/>
</dbReference>
<dbReference type="Pfam" id="PF13181">
    <property type="entry name" value="TPR_8"/>
    <property type="match status" value="1"/>
</dbReference>
<dbReference type="SMART" id="SM00028">
    <property type="entry name" value="TPR"/>
    <property type="match status" value="3"/>
</dbReference>
<dbReference type="SUPFAM" id="SSF48452">
    <property type="entry name" value="TPR-like"/>
    <property type="match status" value="1"/>
</dbReference>
<dbReference type="PROSITE" id="PS50293">
    <property type="entry name" value="TPR_REGION"/>
    <property type="match status" value="1"/>
</dbReference>
<name>TTC36_XENTR</name>